<protein>
    <recommendedName>
        <fullName evidence="1">UDP-N-acetylglucosamine 1-carboxyvinyltransferase 1</fullName>
        <ecNumber evidence="1">2.5.1.7</ecNumber>
    </recommendedName>
    <alternativeName>
        <fullName evidence="1">Enoylpyruvate transferase 1</fullName>
    </alternativeName>
    <alternativeName>
        <fullName evidence="1">UDP-N-acetylglucosamine enolpyruvyl transferase 1</fullName>
        <shortName evidence="1">EPT 1</shortName>
    </alternativeName>
</protein>
<keyword id="KW-0131">Cell cycle</keyword>
<keyword id="KW-0132">Cell division</keyword>
<keyword id="KW-0133">Cell shape</keyword>
<keyword id="KW-0961">Cell wall biogenesis/degradation</keyword>
<keyword id="KW-0963">Cytoplasm</keyword>
<keyword id="KW-0573">Peptidoglycan synthesis</keyword>
<keyword id="KW-0670">Pyruvate</keyword>
<keyword id="KW-1185">Reference proteome</keyword>
<keyword id="KW-0808">Transferase</keyword>
<comment type="function">
    <text evidence="1">Cell wall formation. Adds enolpyruvyl to UDP-N-acetylglucosamine.</text>
</comment>
<comment type="catalytic activity">
    <reaction evidence="1">
        <text>phosphoenolpyruvate + UDP-N-acetyl-alpha-D-glucosamine = UDP-N-acetyl-3-O-(1-carboxyvinyl)-alpha-D-glucosamine + phosphate</text>
        <dbReference type="Rhea" id="RHEA:18681"/>
        <dbReference type="ChEBI" id="CHEBI:43474"/>
        <dbReference type="ChEBI" id="CHEBI:57705"/>
        <dbReference type="ChEBI" id="CHEBI:58702"/>
        <dbReference type="ChEBI" id="CHEBI:68483"/>
        <dbReference type="EC" id="2.5.1.7"/>
    </reaction>
</comment>
<comment type="pathway">
    <text evidence="1">Cell wall biogenesis; peptidoglycan biosynthesis.</text>
</comment>
<comment type="subcellular location">
    <subcellularLocation>
        <location evidence="1">Cytoplasm</location>
    </subcellularLocation>
</comment>
<comment type="similarity">
    <text evidence="1">Belongs to the EPSP synthase family. MurA subfamily.</text>
</comment>
<comment type="sequence caution" evidence="2">
    <conflict type="erroneous initiation">
        <sequence resource="EMBL-CDS" id="AAV60803"/>
    </conflict>
</comment>
<gene>
    <name evidence="1" type="primary">murA1</name>
    <name type="synonym">murA</name>
    <name type="ordered locus">stu1167</name>
</gene>
<accession>Q5M439</accession>
<name>MURA1_STRT2</name>
<feature type="chain" id="PRO_0000231282" description="UDP-N-acetylglucosamine 1-carboxyvinyltransferase 1">
    <location>
        <begin position="1"/>
        <end position="423"/>
    </location>
</feature>
<feature type="active site" description="Proton donor" evidence="1">
    <location>
        <position position="120"/>
    </location>
</feature>
<feature type="binding site" evidence="1">
    <location>
        <begin position="23"/>
        <end position="24"/>
    </location>
    <ligand>
        <name>phosphoenolpyruvate</name>
        <dbReference type="ChEBI" id="CHEBI:58702"/>
    </ligand>
</feature>
<feature type="binding site" evidence="1">
    <location>
        <position position="96"/>
    </location>
    <ligand>
        <name>UDP-N-acetyl-alpha-D-glucosamine</name>
        <dbReference type="ChEBI" id="CHEBI:57705"/>
    </ligand>
</feature>
<feature type="binding site" evidence="1">
    <location>
        <begin position="125"/>
        <end position="129"/>
    </location>
    <ligand>
        <name>UDP-N-acetyl-alpha-D-glucosamine</name>
        <dbReference type="ChEBI" id="CHEBI:57705"/>
    </ligand>
</feature>
<feature type="binding site" evidence="1">
    <location>
        <position position="309"/>
    </location>
    <ligand>
        <name>UDP-N-acetyl-alpha-D-glucosamine</name>
        <dbReference type="ChEBI" id="CHEBI:57705"/>
    </ligand>
</feature>
<feature type="binding site" evidence="1">
    <location>
        <position position="331"/>
    </location>
    <ligand>
        <name>UDP-N-acetyl-alpha-D-glucosamine</name>
        <dbReference type="ChEBI" id="CHEBI:57705"/>
    </ligand>
</feature>
<feature type="modified residue" description="2-(S-cysteinyl)pyruvic acid O-phosphothioketal" evidence="1">
    <location>
        <position position="120"/>
    </location>
</feature>
<proteinExistence type="inferred from homology"/>
<sequence length="423" mass="45193">MDKIIVKGGNTRLSGEVVIEGAKNAVLPLLAATILASEGQTTLTNVPILSDVYTMNNVVRGLDIAVDFNEENNTVVVDASGEILDQAPYEYVSKMRASIVVLGPILARNGHAKVSMPGGCTIGSRPIDLHLKGLEAMGAKIIQVGGDITATAEKLKGATIYMDFPSVGATQNLMMAATLADGVTTIENAAREPEIVDLAILLNEMGANVKGAGTEKLVIKGVKSLHGTQHAVIQDRIEAGTFMVAAAMTSGNVLIKDAIWEHNRPLISKLLEMGVDVKEEDRGIRVKSDVSKLKPVAVKTLPHPGFPTDMQAQFTALMAVVKGKSSISETVFENRFQHLEEMRRMGLHSEILRDTAMIHGGLPLQGARVMSTDLRASAALILTGMVAEGTTTVGKLTHLDRGYYKFHEKLAKLGAQISRVSEA</sequence>
<evidence type="ECO:0000255" key="1">
    <source>
        <dbReference type="HAMAP-Rule" id="MF_00111"/>
    </source>
</evidence>
<evidence type="ECO:0000305" key="2"/>
<organism>
    <name type="scientific">Streptococcus thermophilus (strain ATCC BAA-250 / LMG 18311)</name>
    <dbReference type="NCBI Taxonomy" id="264199"/>
    <lineage>
        <taxon>Bacteria</taxon>
        <taxon>Bacillati</taxon>
        <taxon>Bacillota</taxon>
        <taxon>Bacilli</taxon>
        <taxon>Lactobacillales</taxon>
        <taxon>Streptococcaceae</taxon>
        <taxon>Streptococcus</taxon>
    </lineage>
</organism>
<reference key="1">
    <citation type="journal article" date="2004" name="Nat. Biotechnol.">
        <title>Complete sequence and comparative genome analysis of the dairy bacterium Streptococcus thermophilus.</title>
        <authorList>
            <person name="Bolotin A."/>
            <person name="Quinquis B."/>
            <person name="Renault P."/>
            <person name="Sorokin A."/>
            <person name="Ehrlich S.D."/>
            <person name="Kulakauskas S."/>
            <person name="Lapidus A."/>
            <person name="Goltsman E."/>
            <person name="Mazur M."/>
            <person name="Pusch G.D."/>
            <person name="Fonstein M."/>
            <person name="Overbeek R."/>
            <person name="Kyprides N."/>
            <person name="Purnelle B."/>
            <person name="Prozzi D."/>
            <person name="Ngui K."/>
            <person name="Masuy D."/>
            <person name="Hancy F."/>
            <person name="Burteau S."/>
            <person name="Boutry M."/>
            <person name="Delcour J."/>
            <person name="Goffeau A."/>
            <person name="Hols P."/>
        </authorList>
    </citation>
    <scope>NUCLEOTIDE SEQUENCE [LARGE SCALE GENOMIC DNA]</scope>
    <source>
        <strain>ATCC BAA-250 / LMG 18311</strain>
    </source>
</reference>
<dbReference type="EC" id="2.5.1.7" evidence="1"/>
<dbReference type="EMBL" id="CP000023">
    <property type="protein sequence ID" value="AAV60803.1"/>
    <property type="status" value="ALT_INIT"/>
    <property type="molecule type" value="Genomic_DNA"/>
</dbReference>
<dbReference type="RefSeq" id="WP_041828250.1">
    <property type="nucleotide sequence ID" value="NC_006448.1"/>
</dbReference>
<dbReference type="SMR" id="Q5M439"/>
<dbReference type="STRING" id="264199.stu1167"/>
<dbReference type="GeneID" id="66898961"/>
<dbReference type="KEGG" id="stl:stu1167"/>
<dbReference type="PATRIC" id="fig|264199.4.peg.1149"/>
<dbReference type="eggNOG" id="COG0766">
    <property type="taxonomic scope" value="Bacteria"/>
</dbReference>
<dbReference type="HOGENOM" id="CLU_027387_0_0_9"/>
<dbReference type="UniPathway" id="UPA00219"/>
<dbReference type="Proteomes" id="UP000001170">
    <property type="component" value="Chromosome"/>
</dbReference>
<dbReference type="GO" id="GO:0005737">
    <property type="term" value="C:cytoplasm"/>
    <property type="evidence" value="ECO:0007669"/>
    <property type="project" value="UniProtKB-SubCell"/>
</dbReference>
<dbReference type="GO" id="GO:0008760">
    <property type="term" value="F:UDP-N-acetylglucosamine 1-carboxyvinyltransferase activity"/>
    <property type="evidence" value="ECO:0007669"/>
    <property type="project" value="UniProtKB-UniRule"/>
</dbReference>
<dbReference type="GO" id="GO:0051301">
    <property type="term" value="P:cell division"/>
    <property type="evidence" value="ECO:0007669"/>
    <property type="project" value="UniProtKB-KW"/>
</dbReference>
<dbReference type="GO" id="GO:0071555">
    <property type="term" value="P:cell wall organization"/>
    <property type="evidence" value="ECO:0007669"/>
    <property type="project" value="UniProtKB-KW"/>
</dbReference>
<dbReference type="GO" id="GO:0009252">
    <property type="term" value="P:peptidoglycan biosynthetic process"/>
    <property type="evidence" value="ECO:0007669"/>
    <property type="project" value="UniProtKB-UniRule"/>
</dbReference>
<dbReference type="GO" id="GO:0008360">
    <property type="term" value="P:regulation of cell shape"/>
    <property type="evidence" value="ECO:0007669"/>
    <property type="project" value="UniProtKB-KW"/>
</dbReference>
<dbReference type="GO" id="GO:0019277">
    <property type="term" value="P:UDP-N-acetylgalactosamine biosynthetic process"/>
    <property type="evidence" value="ECO:0007669"/>
    <property type="project" value="InterPro"/>
</dbReference>
<dbReference type="CDD" id="cd01555">
    <property type="entry name" value="UdpNAET"/>
    <property type="match status" value="1"/>
</dbReference>
<dbReference type="FunFam" id="3.65.10.10:FF:000001">
    <property type="entry name" value="UDP-N-acetylglucosamine 1-carboxyvinyltransferase"/>
    <property type="match status" value="1"/>
</dbReference>
<dbReference type="Gene3D" id="3.65.10.10">
    <property type="entry name" value="Enolpyruvate transferase domain"/>
    <property type="match status" value="2"/>
</dbReference>
<dbReference type="HAMAP" id="MF_00111">
    <property type="entry name" value="MurA"/>
    <property type="match status" value="1"/>
</dbReference>
<dbReference type="InterPro" id="IPR001986">
    <property type="entry name" value="Enolpyruvate_Tfrase_dom"/>
</dbReference>
<dbReference type="InterPro" id="IPR036968">
    <property type="entry name" value="Enolpyruvate_Tfrase_sf"/>
</dbReference>
<dbReference type="InterPro" id="IPR050068">
    <property type="entry name" value="MurA_subfamily"/>
</dbReference>
<dbReference type="InterPro" id="IPR013792">
    <property type="entry name" value="RNA3'P_cycl/enolpyr_Trfase_a/b"/>
</dbReference>
<dbReference type="InterPro" id="IPR005750">
    <property type="entry name" value="UDP_GlcNAc_COvinyl_MurA"/>
</dbReference>
<dbReference type="NCBIfam" id="TIGR01072">
    <property type="entry name" value="murA"/>
    <property type="match status" value="1"/>
</dbReference>
<dbReference type="NCBIfam" id="NF006873">
    <property type="entry name" value="PRK09369.1"/>
    <property type="match status" value="1"/>
</dbReference>
<dbReference type="PANTHER" id="PTHR43783">
    <property type="entry name" value="UDP-N-ACETYLGLUCOSAMINE 1-CARBOXYVINYLTRANSFERASE"/>
    <property type="match status" value="1"/>
</dbReference>
<dbReference type="PANTHER" id="PTHR43783:SF1">
    <property type="entry name" value="UDP-N-ACETYLGLUCOSAMINE 1-CARBOXYVINYLTRANSFERASE"/>
    <property type="match status" value="1"/>
</dbReference>
<dbReference type="Pfam" id="PF00275">
    <property type="entry name" value="EPSP_synthase"/>
    <property type="match status" value="1"/>
</dbReference>
<dbReference type="SUPFAM" id="SSF55205">
    <property type="entry name" value="EPT/RTPC-like"/>
    <property type="match status" value="1"/>
</dbReference>